<proteinExistence type="evidence at protein level"/>
<name>ILVD_BACSU</name>
<gene>
    <name evidence="1" type="primary">ilvD</name>
    <name type="ordered locus">BSU21870</name>
</gene>
<evidence type="ECO:0000255" key="1">
    <source>
        <dbReference type="HAMAP-Rule" id="MF_00012"/>
    </source>
</evidence>
<evidence type="ECO:0000269" key="2">
    <source>
    </source>
</evidence>
<evidence type="ECO:0000305" key="3"/>
<organism>
    <name type="scientific">Bacillus subtilis (strain 168)</name>
    <dbReference type="NCBI Taxonomy" id="224308"/>
    <lineage>
        <taxon>Bacteria</taxon>
        <taxon>Bacillati</taxon>
        <taxon>Bacillota</taxon>
        <taxon>Bacilli</taxon>
        <taxon>Bacillales</taxon>
        <taxon>Bacillaceae</taxon>
        <taxon>Bacillus</taxon>
    </lineage>
</organism>
<feature type="initiator methionine" description="Removed" evidence="2">
    <location>
        <position position="1"/>
    </location>
</feature>
<feature type="chain" id="PRO_0000103431" description="Dihydroxy-acid dehydratase">
    <location>
        <begin position="2"/>
        <end position="558"/>
    </location>
</feature>
<feature type="active site" description="Proton acceptor" evidence="1">
    <location>
        <position position="473"/>
    </location>
</feature>
<feature type="binding site" evidence="1">
    <location>
        <position position="81"/>
    </location>
    <ligand>
        <name>Mg(2+)</name>
        <dbReference type="ChEBI" id="CHEBI:18420"/>
    </ligand>
</feature>
<feature type="binding site" evidence="1">
    <location>
        <position position="122"/>
    </location>
    <ligand>
        <name>[2Fe-2S] cluster</name>
        <dbReference type="ChEBI" id="CHEBI:190135"/>
    </ligand>
</feature>
<feature type="binding site" evidence="1">
    <location>
        <position position="123"/>
    </location>
    <ligand>
        <name>Mg(2+)</name>
        <dbReference type="ChEBI" id="CHEBI:18420"/>
    </ligand>
</feature>
<feature type="binding site" description="via carbamate group" evidence="1">
    <location>
        <position position="124"/>
    </location>
    <ligand>
        <name>Mg(2+)</name>
        <dbReference type="ChEBI" id="CHEBI:18420"/>
    </ligand>
</feature>
<feature type="binding site" evidence="1">
    <location>
        <position position="195"/>
    </location>
    <ligand>
        <name>[2Fe-2S] cluster</name>
        <dbReference type="ChEBI" id="CHEBI:190135"/>
    </ligand>
</feature>
<feature type="binding site" evidence="1">
    <location>
        <position position="447"/>
    </location>
    <ligand>
        <name>Mg(2+)</name>
        <dbReference type="ChEBI" id="CHEBI:18420"/>
    </ligand>
</feature>
<feature type="modified residue" description="N6-carboxylysine" evidence="1">
    <location>
        <position position="124"/>
    </location>
</feature>
<feature type="sequence conflict" description="In Ref. 1; AAA96629." evidence="3" ref="1">
    <original>D</original>
    <variation>Y</variation>
    <location>
        <position position="155"/>
    </location>
</feature>
<protein>
    <recommendedName>
        <fullName evidence="1">Dihydroxy-acid dehydratase</fullName>
        <shortName evidence="1">DAD</shortName>
        <ecNumber evidence="1">4.2.1.9</ecNumber>
    </recommendedName>
    <alternativeName>
        <fullName>Vegetative protein 110</fullName>
        <shortName>VEG110</shortName>
    </alternativeName>
</protein>
<sequence length="558" mass="59500">MAELRSNMITQGIDRAPHRSLLRAAGVKEEDFGKPFIAVCNSYIDIVPGHVHLQEFGKIVKEAIREAGGVPFEFNTIGVDDGIAMGHIGMRYSLPSREIIADSVETVVSAHWFDGMVCIPNCDKITPGMLMAAMRINIPTIFVSGGPMAAGRTSDGRKISLSSVFEGVGAYQAGKINENELQELEQFGCPTCGSCSGMFTANSMNCLSEALGLALPGNGTILATSPERKEFVRKSAAQLMETIRKDIKPRDIVTVKAIDNAFALDMALGGSTNTVLHTLALANEAGVEYSLERINEVAERVPHLAKLAPASDVFIEDLHEAGGVSAALNELSKKEGALHLDALTVTGKTLGETIAGHEVKDYDVIHPLDQPFTEKGGLAVLFGNLAPDGAIIKTGGVQNGITRHEGPAVVFDSQDEALDGIINRKVKEGDVVIIRYEGPKGGPGMPEMLAPTSQIVGMGLGPKVALITDGRFSGASRGLSIGHVSPEAAEGGPLAFVENGDHIIVDIEKRILDVQVPEEEWEKRKANWKGFEPKVKTGYLARYSKLVTSANTGGIMKI</sequence>
<dbReference type="EC" id="4.2.1.9" evidence="1"/>
<dbReference type="EMBL" id="L77246">
    <property type="protein sequence ID" value="AAA96629.1"/>
    <property type="molecule type" value="Genomic_DNA"/>
</dbReference>
<dbReference type="EMBL" id="AL009126">
    <property type="protein sequence ID" value="CAB14105.2"/>
    <property type="molecule type" value="Genomic_DNA"/>
</dbReference>
<dbReference type="PIR" id="D69644">
    <property type="entry name" value="D69644"/>
</dbReference>
<dbReference type="RefSeq" id="NP_390070.2">
    <property type="nucleotide sequence ID" value="NC_000964.3"/>
</dbReference>
<dbReference type="RefSeq" id="WP_009967560.1">
    <property type="nucleotide sequence ID" value="NZ_OZ025638.1"/>
</dbReference>
<dbReference type="SMR" id="P51785"/>
<dbReference type="FunCoup" id="P51785">
    <property type="interactions" value="677"/>
</dbReference>
<dbReference type="IntAct" id="P51785">
    <property type="interactions" value="1"/>
</dbReference>
<dbReference type="MINT" id="P51785"/>
<dbReference type="STRING" id="224308.BSU21870"/>
<dbReference type="PaxDb" id="224308-BSU21870"/>
<dbReference type="EnsemblBacteria" id="CAB14105">
    <property type="protein sequence ID" value="CAB14105"/>
    <property type="gene ID" value="BSU_21870"/>
</dbReference>
<dbReference type="GeneID" id="939084"/>
<dbReference type="KEGG" id="bsu:BSU21870"/>
<dbReference type="PATRIC" id="fig|224308.179.peg.2389"/>
<dbReference type="eggNOG" id="COG0129">
    <property type="taxonomic scope" value="Bacteria"/>
</dbReference>
<dbReference type="InParanoid" id="P51785"/>
<dbReference type="OrthoDB" id="9807077at2"/>
<dbReference type="PhylomeDB" id="P51785"/>
<dbReference type="BioCyc" id="BSUB:BSU21870-MONOMER"/>
<dbReference type="UniPathway" id="UPA00047">
    <property type="reaction ID" value="UER00057"/>
</dbReference>
<dbReference type="UniPathway" id="UPA00049">
    <property type="reaction ID" value="UER00061"/>
</dbReference>
<dbReference type="Proteomes" id="UP000001570">
    <property type="component" value="Chromosome"/>
</dbReference>
<dbReference type="GO" id="GO:0005829">
    <property type="term" value="C:cytosol"/>
    <property type="evidence" value="ECO:0000318"/>
    <property type="project" value="GO_Central"/>
</dbReference>
<dbReference type="GO" id="GO:0051537">
    <property type="term" value="F:2 iron, 2 sulfur cluster binding"/>
    <property type="evidence" value="ECO:0007669"/>
    <property type="project" value="UniProtKB-UniRule"/>
</dbReference>
<dbReference type="GO" id="GO:0004160">
    <property type="term" value="F:dihydroxy-acid dehydratase activity"/>
    <property type="evidence" value="ECO:0007669"/>
    <property type="project" value="UniProtKB-UniRule"/>
</dbReference>
<dbReference type="GO" id="GO:0016836">
    <property type="term" value="F:hydro-lyase activity"/>
    <property type="evidence" value="ECO:0000318"/>
    <property type="project" value="GO_Central"/>
</dbReference>
<dbReference type="GO" id="GO:0000287">
    <property type="term" value="F:magnesium ion binding"/>
    <property type="evidence" value="ECO:0007669"/>
    <property type="project" value="UniProtKB-UniRule"/>
</dbReference>
<dbReference type="GO" id="GO:0009097">
    <property type="term" value="P:isoleucine biosynthetic process"/>
    <property type="evidence" value="ECO:0007669"/>
    <property type="project" value="UniProtKB-UniRule"/>
</dbReference>
<dbReference type="GO" id="GO:0009099">
    <property type="term" value="P:L-valine biosynthetic process"/>
    <property type="evidence" value="ECO:0007669"/>
    <property type="project" value="UniProtKB-UniRule"/>
</dbReference>
<dbReference type="FunFam" id="3.50.30.80:FF:000001">
    <property type="entry name" value="Dihydroxy-acid dehydratase"/>
    <property type="match status" value="1"/>
</dbReference>
<dbReference type="Gene3D" id="3.50.30.80">
    <property type="entry name" value="IlvD/EDD C-terminal domain-like"/>
    <property type="match status" value="1"/>
</dbReference>
<dbReference type="HAMAP" id="MF_00012">
    <property type="entry name" value="IlvD"/>
    <property type="match status" value="1"/>
</dbReference>
<dbReference type="InterPro" id="IPR042096">
    <property type="entry name" value="Dihydro-acid_dehy_C"/>
</dbReference>
<dbReference type="InterPro" id="IPR004404">
    <property type="entry name" value="DihydroxyA_deHydtase"/>
</dbReference>
<dbReference type="InterPro" id="IPR020558">
    <property type="entry name" value="DiOHA_6PGluconate_deHydtase_CS"/>
</dbReference>
<dbReference type="InterPro" id="IPR056740">
    <property type="entry name" value="ILV_EDD_C"/>
</dbReference>
<dbReference type="InterPro" id="IPR000581">
    <property type="entry name" value="ILV_EDD_N"/>
</dbReference>
<dbReference type="InterPro" id="IPR037237">
    <property type="entry name" value="IlvD/EDD_N"/>
</dbReference>
<dbReference type="NCBIfam" id="TIGR00110">
    <property type="entry name" value="ilvD"/>
    <property type="match status" value="1"/>
</dbReference>
<dbReference type="NCBIfam" id="NF002068">
    <property type="entry name" value="PRK00911.1"/>
    <property type="match status" value="1"/>
</dbReference>
<dbReference type="PANTHER" id="PTHR43661">
    <property type="entry name" value="D-XYLONATE DEHYDRATASE"/>
    <property type="match status" value="1"/>
</dbReference>
<dbReference type="PANTHER" id="PTHR43661:SF3">
    <property type="entry name" value="D-XYLONATE DEHYDRATASE YAGF-RELATED"/>
    <property type="match status" value="1"/>
</dbReference>
<dbReference type="Pfam" id="PF24877">
    <property type="entry name" value="ILV_EDD_C"/>
    <property type="match status" value="1"/>
</dbReference>
<dbReference type="Pfam" id="PF00920">
    <property type="entry name" value="ILVD_EDD_N"/>
    <property type="match status" value="1"/>
</dbReference>
<dbReference type="SUPFAM" id="SSF143975">
    <property type="entry name" value="IlvD/EDD N-terminal domain-like"/>
    <property type="match status" value="1"/>
</dbReference>
<dbReference type="SUPFAM" id="SSF52016">
    <property type="entry name" value="LeuD/IlvD-like"/>
    <property type="match status" value="1"/>
</dbReference>
<dbReference type="PROSITE" id="PS00886">
    <property type="entry name" value="ILVD_EDD_1"/>
    <property type="match status" value="1"/>
</dbReference>
<dbReference type="PROSITE" id="PS00887">
    <property type="entry name" value="ILVD_EDD_2"/>
    <property type="match status" value="1"/>
</dbReference>
<keyword id="KW-0001">2Fe-2S</keyword>
<keyword id="KW-0028">Amino-acid biosynthesis</keyword>
<keyword id="KW-0100">Branched-chain amino acid biosynthesis</keyword>
<keyword id="KW-0903">Direct protein sequencing</keyword>
<keyword id="KW-0408">Iron</keyword>
<keyword id="KW-0411">Iron-sulfur</keyword>
<keyword id="KW-0456">Lyase</keyword>
<keyword id="KW-0460">Magnesium</keyword>
<keyword id="KW-0479">Metal-binding</keyword>
<keyword id="KW-1185">Reference proteome</keyword>
<accession>P51785</accession>
<reference key="1">
    <citation type="journal article" date="1996" name="Microbiology">
        <title>Organization of the Bacillus subtilis 168 chromosome between kdg and the attachment site of the SP beta prophage: use of long accurate PCR and yeast artificial chromosomes for sequencing.</title>
        <authorList>
            <person name="Capuano V."/>
            <person name="Galleron N."/>
            <person name="Pujic P."/>
            <person name="Sorokin A."/>
            <person name="Ehrlich S.D."/>
        </authorList>
    </citation>
    <scope>NUCLEOTIDE SEQUENCE [GENOMIC DNA]</scope>
    <source>
        <strain>168 / Marburg / ATCC 6051 / DSM 10 / JCM 1465 / NBRC 13719 / NCIMB 3610 / NRRL NRS-744 / VKM B-501</strain>
    </source>
</reference>
<reference key="2">
    <citation type="journal article" date="1997" name="Nature">
        <title>The complete genome sequence of the Gram-positive bacterium Bacillus subtilis.</title>
        <authorList>
            <person name="Kunst F."/>
            <person name="Ogasawara N."/>
            <person name="Moszer I."/>
            <person name="Albertini A.M."/>
            <person name="Alloni G."/>
            <person name="Azevedo V."/>
            <person name="Bertero M.G."/>
            <person name="Bessieres P."/>
            <person name="Bolotin A."/>
            <person name="Borchert S."/>
            <person name="Borriss R."/>
            <person name="Boursier L."/>
            <person name="Brans A."/>
            <person name="Braun M."/>
            <person name="Brignell S.C."/>
            <person name="Bron S."/>
            <person name="Brouillet S."/>
            <person name="Bruschi C.V."/>
            <person name="Caldwell B."/>
            <person name="Capuano V."/>
            <person name="Carter N.M."/>
            <person name="Choi S.-K."/>
            <person name="Codani J.-J."/>
            <person name="Connerton I.F."/>
            <person name="Cummings N.J."/>
            <person name="Daniel R.A."/>
            <person name="Denizot F."/>
            <person name="Devine K.M."/>
            <person name="Duesterhoeft A."/>
            <person name="Ehrlich S.D."/>
            <person name="Emmerson P.T."/>
            <person name="Entian K.-D."/>
            <person name="Errington J."/>
            <person name="Fabret C."/>
            <person name="Ferrari E."/>
            <person name="Foulger D."/>
            <person name="Fritz C."/>
            <person name="Fujita M."/>
            <person name="Fujita Y."/>
            <person name="Fuma S."/>
            <person name="Galizzi A."/>
            <person name="Galleron N."/>
            <person name="Ghim S.-Y."/>
            <person name="Glaser P."/>
            <person name="Goffeau A."/>
            <person name="Golightly E.J."/>
            <person name="Grandi G."/>
            <person name="Guiseppi G."/>
            <person name="Guy B.J."/>
            <person name="Haga K."/>
            <person name="Haiech J."/>
            <person name="Harwood C.R."/>
            <person name="Henaut A."/>
            <person name="Hilbert H."/>
            <person name="Holsappel S."/>
            <person name="Hosono S."/>
            <person name="Hullo M.-F."/>
            <person name="Itaya M."/>
            <person name="Jones L.-M."/>
            <person name="Joris B."/>
            <person name="Karamata D."/>
            <person name="Kasahara Y."/>
            <person name="Klaerr-Blanchard M."/>
            <person name="Klein C."/>
            <person name="Kobayashi Y."/>
            <person name="Koetter P."/>
            <person name="Koningstein G."/>
            <person name="Krogh S."/>
            <person name="Kumano M."/>
            <person name="Kurita K."/>
            <person name="Lapidus A."/>
            <person name="Lardinois S."/>
            <person name="Lauber J."/>
            <person name="Lazarevic V."/>
            <person name="Lee S.-M."/>
            <person name="Levine A."/>
            <person name="Liu H."/>
            <person name="Masuda S."/>
            <person name="Mauel C."/>
            <person name="Medigue C."/>
            <person name="Medina N."/>
            <person name="Mellado R.P."/>
            <person name="Mizuno M."/>
            <person name="Moestl D."/>
            <person name="Nakai S."/>
            <person name="Noback M."/>
            <person name="Noone D."/>
            <person name="O'Reilly M."/>
            <person name="Ogawa K."/>
            <person name="Ogiwara A."/>
            <person name="Oudega B."/>
            <person name="Park S.-H."/>
            <person name="Parro V."/>
            <person name="Pohl T.M."/>
            <person name="Portetelle D."/>
            <person name="Porwollik S."/>
            <person name="Prescott A.M."/>
            <person name="Presecan E."/>
            <person name="Pujic P."/>
            <person name="Purnelle B."/>
            <person name="Rapoport G."/>
            <person name="Rey M."/>
            <person name="Reynolds S."/>
            <person name="Rieger M."/>
            <person name="Rivolta C."/>
            <person name="Rocha E."/>
            <person name="Roche B."/>
            <person name="Rose M."/>
            <person name="Sadaie Y."/>
            <person name="Sato T."/>
            <person name="Scanlan E."/>
            <person name="Schleich S."/>
            <person name="Schroeter R."/>
            <person name="Scoffone F."/>
            <person name="Sekiguchi J."/>
            <person name="Sekowska A."/>
            <person name="Seror S.J."/>
            <person name="Serror P."/>
            <person name="Shin B.-S."/>
            <person name="Soldo B."/>
            <person name="Sorokin A."/>
            <person name="Tacconi E."/>
            <person name="Takagi T."/>
            <person name="Takahashi H."/>
            <person name="Takemaru K."/>
            <person name="Takeuchi M."/>
            <person name="Tamakoshi A."/>
            <person name="Tanaka T."/>
            <person name="Terpstra P."/>
            <person name="Tognoni A."/>
            <person name="Tosato V."/>
            <person name="Uchiyama S."/>
            <person name="Vandenbol M."/>
            <person name="Vannier F."/>
            <person name="Vassarotti A."/>
            <person name="Viari A."/>
            <person name="Wambutt R."/>
            <person name="Wedler E."/>
            <person name="Wedler H."/>
            <person name="Weitzenegger T."/>
            <person name="Winters P."/>
            <person name="Wipat A."/>
            <person name="Yamamoto H."/>
            <person name="Yamane K."/>
            <person name="Yasumoto K."/>
            <person name="Yata K."/>
            <person name="Yoshida K."/>
            <person name="Yoshikawa H.-F."/>
            <person name="Zumstein E."/>
            <person name="Yoshikawa H."/>
            <person name="Danchin A."/>
        </authorList>
    </citation>
    <scope>NUCLEOTIDE SEQUENCE [LARGE SCALE GENOMIC DNA]</scope>
    <source>
        <strain>168</strain>
    </source>
</reference>
<reference key="3">
    <citation type="journal article" date="2009" name="Microbiology">
        <title>From a consortium sequence to a unified sequence: the Bacillus subtilis 168 reference genome a decade later.</title>
        <authorList>
            <person name="Barbe V."/>
            <person name="Cruveiller S."/>
            <person name="Kunst F."/>
            <person name="Lenoble P."/>
            <person name="Meurice G."/>
            <person name="Sekowska A."/>
            <person name="Vallenet D."/>
            <person name="Wang T."/>
            <person name="Moszer I."/>
            <person name="Medigue C."/>
            <person name="Danchin A."/>
        </authorList>
    </citation>
    <scope>SEQUENCE REVISION TO 155</scope>
</reference>
<reference key="4">
    <citation type="journal article" date="1997" name="Electrophoresis">
        <title>First steps from a two-dimensional protein index towards a response-regulation map for Bacillus subtilis.</title>
        <authorList>
            <person name="Antelmann H."/>
            <person name="Bernhardt J."/>
            <person name="Schmid R."/>
            <person name="Mach H."/>
            <person name="Voelker U."/>
            <person name="Hecker M."/>
        </authorList>
    </citation>
    <scope>PROTEIN SEQUENCE OF 2-16</scope>
    <source>
        <strain>168 / IS58</strain>
    </source>
</reference>
<comment type="function">
    <text evidence="1">Functions in the biosynthesis of branched-chain amino acids. Catalyzes the dehydration of (2R,3R)-2,3-dihydroxy-3-methylpentanoate (2,3-dihydroxy-3-methylvalerate) into 2-oxo-3-methylpentanoate (2-oxo-3-methylvalerate) and of (2R)-2,3-dihydroxy-3-methylbutanoate (2,3-dihydroxyisovalerate) into 2-oxo-3-methylbutanoate (2-oxoisovalerate), the penultimate precursor to L-isoleucine and L-valine, respectively.</text>
</comment>
<comment type="catalytic activity">
    <reaction evidence="1">
        <text>(2R)-2,3-dihydroxy-3-methylbutanoate = 3-methyl-2-oxobutanoate + H2O</text>
        <dbReference type="Rhea" id="RHEA:24809"/>
        <dbReference type="ChEBI" id="CHEBI:11851"/>
        <dbReference type="ChEBI" id="CHEBI:15377"/>
        <dbReference type="ChEBI" id="CHEBI:49072"/>
        <dbReference type="EC" id="4.2.1.9"/>
    </reaction>
    <physiologicalReaction direction="left-to-right" evidence="1">
        <dbReference type="Rhea" id="RHEA:24810"/>
    </physiologicalReaction>
</comment>
<comment type="catalytic activity">
    <reaction evidence="1">
        <text>(2R,3R)-2,3-dihydroxy-3-methylpentanoate = (S)-3-methyl-2-oxopentanoate + H2O</text>
        <dbReference type="Rhea" id="RHEA:27694"/>
        <dbReference type="ChEBI" id="CHEBI:15377"/>
        <dbReference type="ChEBI" id="CHEBI:35146"/>
        <dbReference type="ChEBI" id="CHEBI:49258"/>
        <dbReference type="EC" id="4.2.1.9"/>
    </reaction>
    <physiologicalReaction direction="left-to-right" evidence="1">
        <dbReference type="Rhea" id="RHEA:27695"/>
    </physiologicalReaction>
</comment>
<comment type="cofactor">
    <cofactor evidence="1">
        <name>[2Fe-2S] cluster</name>
        <dbReference type="ChEBI" id="CHEBI:190135"/>
    </cofactor>
    <text evidence="1">Binds 1 [2Fe-2S] cluster per subunit. This cluster acts as a Lewis acid cofactor.</text>
</comment>
<comment type="cofactor">
    <cofactor evidence="1">
        <name>Mg(2+)</name>
        <dbReference type="ChEBI" id="CHEBI:18420"/>
    </cofactor>
</comment>
<comment type="pathway">
    <text evidence="1">Amino-acid biosynthesis; L-isoleucine biosynthesis; L-isoleucine from 2-oxobutanoate: step 3/4.</text>
</comment>
<comment type="pathway">
    <text evidence="1">Amino-acid biosynthesis; L-valine biosynthesis; L-valine from pyruvate: step 3/4.</text>
</comment>
<comment type="subunit">
    <text evidence="1">Homodimer.</text>
</comment>
<comment type="similarity">
    <text evidence="1">Belongs to the IlvD/Edd family.</text>
</comment>